<dbReference type="EC" id="3.2.1.4"/>
<dbReference type="EMBL" id="M32700">
    <property type="protein sequence ID" value="AAA27612.1"/>
    <property type="molecule type" value="Genomic_DNA"/>
</dbReference>
<dbReference type="EMBL" id="AE008922">
    <property type="protein sequence ID" value="AAM42791.1"/>
    <property type="molecule type" value="Genomic_DNA"/>
</dbReference>
<dbReference type="PIR" id="JH0158">
    <property type="entry name" value="JH0158"/>
</dbReference>
<dbReference type="RefSeq" id="NP_638867.1">
    <property type="nucleotide sequence ID" value="NC_003902.1"/>
</dbReference>
<dbReference type="RefSeq" id="WP_011038613.1">
    <property type="nucleotide sequence ID" value="NC_003902.1"/>
</dbReference>
<dbReference type="PDB" id="4TUF">
    <property type="method" value="X-ray"/>
    <property type="resolution" value="2.70 A"/>
    <property type="chains" value="A/B/C/D=26-371"/>
</dbReference>
<dbReference type="PDBsum" id="4TUF"/>
<dbReference type="SMR" id="P19487"/>
<dbReference type="STRING" id="190485.XCC3521"/>
<dbReference type="CAZy" id="CBM2">
    <property type="family name" value="Carbohydrate-Binding Module Family 2"/>
</dbReference>
<dbReference type="CAZy" id="GH5">
    <property type="family name" value="Glycoside Hydrolase Family 5"/>
</dbReference>
<dbReference type="EnsemblBacteria" id="AAM42791">
    <property type="protein sequence ID" value="AAM42791"/>
    <property type="gene ID" value="XCC3521"/>
</dbReference>
<dbReference type="KEGG" id="xcc:XCC3521"/>
<dbReference type="PATRIC" id="fig|190485.4.peg.3766"/>
<dbReference type="eggNOG" id="COG2730">
    <property type="taxonomic scope" value="Bacteria"/>
</dbReference>
<dbReference type="eggNOG" id="COG5297">
    <property type="taxonomic scope" value="Bacteria"/>
</dbReference>
<dbReference type="HOGENOM" id="CLU_020735_1_0_6"/>
<dbReference type="OrthoDB" id="1153097at2"/>
<dbReference type="BRENDA" id="3.2.1.4">
    <property type="organism ID" value="9230"/>
</dbReference>
<dbReference type="EvolutionaryTrace" id="P19487"/>
<dbReference type="Proteomes" id="UP000001010">
    <property type="component" value="Chromosome"/>
</dbReference>
<dbReference type="GO" id="GO:0008810">
    <property type="term" value="F:cellulase activity"/>
    <property type="evidence" value="ECO:0007669"/>
    <property type="project" value="UniProtKB-EC"/>
</dbReference>
<dbReference type="GO" id="GO:0030247">
    <property type="term" value="F:polysaccharide binding"/>
    <property type="evidence" value="ECO:0007669"/>
    <property type="project" value="InterPro"/>
</dbReference>
<dbReference type="GO" id="GO:0030245">
    <property type="term" value="P:cellulose catabolic process"/>
    <property type="evidence" value="ECO:0007669"/>
    <property type="project" value="UniProtKB-KW"/>
</dbReference>
<dbReference type="Gene3D" id="2.60.40.290">
    <property type="match status" value="1"/>
</dbReference>
<dbReference type="Gene3D" id="3.20.20.80">
    <property type="entry name" value="Glycosidases"/>
    <property type="match status" value="1"/>
</dbReference>
<dbReference type="InterPro" id="IPR001919">
    <property type="entry name" value="CBD2"/>
</dbReference>
<dbReference type="InterPro" id="IPR008965">
    <property type="entry name" value="CBM2/CBM3_carb-bd_dom_sf"/>
</dbReference>
<dbReference type="InterPro" id="IPR012291">
    <property type="entry name" value="CBM2_carb-bd_dom_sf"/>
</dbReference>
<dbReference type="InterPro" id="IPR001547">
    <property type="entry name" value="Glyco_hydro_5"/>
</dbReference>
<dbReference type="InterPro" id="IPR018087">
    <property type="entry name" value="Glyco_hydro_5_CS"/>
</dbReference>
<dbReference type="InterPro" id="IPR017853">
    <property type="entry name" value="Glycoside_hydrolase_SF"/>
</dbReference>
<dbReference type="PANTHER" id="PTHR35923:SF2">
    <property type="entry name" value="ENDOGLUCANASE"/>
    <property type="match status" value="1"/>
</dbReference>
<dbReference type="PANTHER" id="PTHR35923">
    <property type="entry name" value="MAJOR EXTRACELLULAR ENDOGLUCANASE"/>
    <property type="match status" value="1"/>
</dbReference>
<dbReference type="Pfam" id="PF00553">
    <property type="entry name" value="CBM_2"/>
    <property type="match status" value="1"/>
</dbReference>
<dbReference type="Pfam" id="PF00150">
    <property type="entry name" value="Cellulase"/>
    <property type="match status" value="1"/>
</dbReference>
<dbReference type="SMART" id="SM00637">
    <property type="entry name" value="CBD_II"/>
    <property type="match status" value="1"/>
</dbReference>
<dbReference type="SUPFAM" id="SSF51445">
    <property type="entry name" value="(Trans)glycosidases"/>
    <property type="match status" value="1"/>
</dbReference>
<dbReference type="SUPFAM" id="SSF49384">
    <property type="entry name" value="Carbohydrate-binding domain"/>
    <property type="match status" value="1"/>
</dbReference>
<dbReference type="PROSITE" id="PS51173">
    <property type="entry name" value="CBM2"/>
    <property type="match status" value="1"/>
</dbReference>
<dbReference type="PROSITE" id="PS00659">
    <property type="entry name" value="GLYCOSYL_HYDROL_F5"/>
    <property type="match status" value="1"/>
</dbReference>
<gene>
    <name type="primary">engXCA</name>
    <name type="ordered locus">XCC3521</name>
</gene>
<name>GUNA_XANCP</name>
<accession>P19487</accession>
<comment type="catalytic activity">
    <reaction>
        <text>Endohydrolysis of (1-&gt;4)-beta-D-glucosidic linkages in cellulose, lichenin and cereal beta-D-glucans.</text>
        <dbReference type="EC" id="3.2.1.4"/>
    </reaction>
</comment>
<comment type="domain">
    <text>The C-terminal region of the protein is not crucial for activity.</text>
</comment>
<comment type="domain">
    <text>The Thr/Pro-rich region (also termed 'hinge') may be a potential site for proteolysis.</text>
</comment>
<comment type="similarity">
    <text evidence="5">Belongs to the glycosyl hydrolase 5 (cellulase A) family.</text>
</comment>
<proteinExistence type="evidence at protein level"/>
<protein>
    <recommendedName>
        <fullName>Major extracellular endoglucanase</fullName>
        <ecNumber>3.2.1.4</ecNumber>
    </recommendedName>
    <alternativeName>
        <fullName>Cellulase</fullName>
    </alternativeName>
    <alternativeName>
        <fullName>Endo-1,4-beta-glucanase</fullName>
    </alternativeName>
</protein>
<keyword id="KW-0002">3D-structure</keyword>
<keyword id="KW-0119">Carbohydrate metabolism</keyword>
<keyword id="KW-0136">Cellulose degradation</keyword>
<keyword id="KW-0903">Direct protein sequencing</keyword>
<keyword id="KW-0326">Glycosidase</keyword>
<keyword id="KW-0378">Hydrolase</keyword>
<keyword id="KW-0624">Polysaccharide degradation</keyword>
<keyword id="KW-1185">Reference proteome</keyword>
<keyword id="KW-0677">Repeat</keyword>
<keyword id="KW-0732">Signal</keyword>
<feature type="signal peptide" evidence="4">
    <location>
        <begin position="1"/>
        <end position="25"/>
    </location>
</feature>
<feature type="chain" id="PRO_0000007875" description="Major extracellular endoglucanase">
    <location>
        <begin position="26"/>
        <end position="484"/>
    </location>
</feature>
<feature type="domain" description="CBM2" evidence="2">
    <location>
        <begin position="395"/>
        <end position="484"/>
    </location>
</feature>
<feature type="region of interest" description="Disordered" evidence="3">
    <location>
        <begin position="370"/>
        <end position="402"/>
    </location>
</feature>
<feature type="region of interest" description="Thr-Pro repeats ('hinge') (Pro-Thr box)">
    <location>
        <begin position="375"/>
        <end position="399"/>
    </location>
</feature>
<feature type="compositionally biased region" description="Pro residues" evidence="3">
    <location>
        <begin position="378"/>
        <end position="398"/>
    </location>
</feature>
<feature type="active site" description="Proton donor" evidence="1">
    <location>
        <position position="182"/>
    </location>
</feature>
<feature type="active site" description="Nucleophile" evidence="1">
    <location>
        <position position="303"/>
    </location>
</feature>
<feature type="sequence conflict" description="In Ref. 1; AAA27612." evidence="5" ref="1">
    <original>VDNSWNGGYCNRVQVTNTGTASGTWSIAVPVTGTVNNAWNATWSQSGSTLRASGVDFNRTLAAGATAEFGFCAAS</original>
    <variation>ASPVVGSAARKLPAASRLACHWPASSTGWRVWVIAAPSVTWKRPHAARAIERRMRVTRLRRATRLNRGPLPAPAHTTQHAPRL</variation>
    <location>
        <begin position="410"/>
        <end position="484"/>
    </location>
</feature>
<feature type="strand" evidence="6">
    <location>
        <begin position="45"/>
        <end position="48"/>
    </location>
</feature>
<feature type="turn" evidence="6">
    <location>
        <begin position="60"/>
        <end position="64"/>
    </location>
</feature>
<feature type="helix" evidence="6">
    <location>
        <begin position="67"/>
        <end position="76"/>
    </location>
</feature>
<feature type="strand" evidence="6">
    <location>
        <begin position="81"/>
        <end position="86"/>
    </location>
</feature>
<feature type="helix" evidence="6">
    <location>
        <begin position="88"/>
        <end position="91"/>
    </location>
</feature>
<feature type="turn" evidence="6">
    <location>
        <begin position="102"/>
        <end position="104"/>
    </location>
</feature>
<feature type="helix" evidence="6">
    <location>
        <begin position="106"/>
        <end position="108"/>
    </location>
</feature>
<feature type="helix" evidence="6">
    <location>
        <begin position="113"/>
        <end position="127"/>
    </location>
</feature>
<feature type="strand" evidence="6">
    <location>
        <begin position="130"/>
        <end position="135"/>
    </location>
</feature>
<feature type="strand" evidence="6">
    <location>
        <begin position="138"/>
        <end position="142"/>
    </location>
</feature>
<feature type="strand" evidence="6">
    <location>
        <begin position="145"/>
        <end position="147"/>
    </location>
</feature>
<feature type="helix" evidence="6">
    <location>
        <begin position="154"/>
        <end position="168"/>
    </location>
</feature>
<feature type="strand" evidence="6">
    <location>
        <begin position="174"/>
        <end position="178"/>
    </location>
</feature>
<feature type="strand" evidence="6">
    <location>
        <begin position="188"/>
        <end position="192"/>
    </location>
</feature>
<feature type="turn" evidence="6">
    <location>
        <begin position="194"/>
        <end position="196"/>
    </location>
</feature>
<feature type="helix" evidence="6">
    <location>
        <begin position="198"/>
        <end position="212"/>
    </location>
</feature>
<feature type="strand" evidence="6">
    <location>
        <begin position="216"/>
        <end position="220"/>
    </location>
</feature>
<feature type="strand" evidence="6">
    <location>
        <begin position="227"/>
        <end position="229"/>
    </location>
</feature>
<feature type="helix" evidence="6">
    <location>
        <begin position="242"/>
        <end position="245"/>
    </location>
</feature>
<feature type="turn" evidence="6">
    <location>
        <begin position="253"/>
        <end position="255"/>
    </location>
</feature>
<feature type="strand" evidence="6">
    <location>
        <begin position="256"/>
        <end position="258"/>
    </location>
</feature>
<feature type="strand" evidence="6">
    <location>
        <begin position="261"/>
        <end position="263"/>
    </location>
</feature>
<feature type="turn" evidence="6">
    <location>
        <begin position="265"/>
        <end position="267"/>
    </location>
</feature>
<feature type="helix" evidence="6">
    <location>
        <begin position="271"/>
        <end position="274"/>
    </location>
</feature>
<feature type="turn" evidence="6">
    <location>
        <begin position="278"/>
        <end position="281"/>
    </location>
</feature>
<feature type="helix" evidence="6">
    <location>
        <begin position="282"/>
        <end position="289"/>
    </location>
</feature>
<feature type="helix" evidence="6">
    <location>
        <begin position="291"/>
        <end position="293"/>
    </location>
</feature>
<feature type="turn" evidence="6">
    <location>
        <begin position="294"/>
        <end position="296"/>
    </location>
</feature>
<feature type="strand" evidence="6">
    <location>
        <begin position="301"/>
        <end position="305"/>
    </location>
</feature>
<feature type="helix" evidence="6">
    <location>
        <begin position="313"/>
        <end position="328"/>
    </location>
</feature>
<feature type="strand" evidence="6">
    <location>
        <begin position="334"/>
        <end position="337"/>
    </location>
</feature>
<feature type="strand" evidence="6">
    <location>
        <begin position="339"/>
        <end position="341"/>
    </location>
</feature>
<feature type="turn" evidence="6">
    <location>
        <begin position="344"/>
        <end position="346"/>
    </location>
</feature>
<feature type="helix" evidence="6">
    <location>
        <begin position="359"/>
        <end position="369"/>
    </location>
</feature>
<reference key="1">
    <citation type="journal article" date="1990" name="Gene">
        <title>Nucleotide sequence of the engXCA gene encoding the major endoglucanase of Xanthomonas campestris pv. campestris.</title>
        <authorList>
            <person name="Gough C.L."/>
            <person name="Dow J.M."/>
            <person name="Keen J."/>
            <person name="Henrissat B."/>
            <person name="Daniels M.J."/>
        </authorList>
    </citation>
    <scope>NUCLEOTIDE SEQUENCE [GENOMIC DNA]</scope>
    <scope>PROTEIN SEQUENCE OF 26-61</scope>
</reference>
<reference key="2">
    <citation type="journal article" date="2002" name="Nature">
        <title>Comparison of the genomes of two Xanthomonas pathogens with differing host specificities.</title>
        <authorList>
            <person name="da Silva A.C.R."/>
            <person name="Ferro J.A."/>
            <person name="Reinach F.C."/>
            <person name="Farah C.S."/>
            <person name="Furlan L.R."/>
            <person name="Quaggio R.B."/>
            <person name="Monteiro-Vitorello C.B."/>
            <person name="Van Sluys M.A."/>
            <person name="Almeida N.F. Jr."/>
            <person name="Alves L.M.C."/>
            <person name="do Amaral A.M."/>
            <person name="Bertolini M.C."/>
            <person name="Camargo L.E.A."/>
            <person name="Camarotte G."/>
            <person name="Cannavan F."/>
            <person name="Cardozo J."/>
            <person name="Chambergo F."/>
            <person name="Ciapina L.P."/>
            <person name="Cicarelli R.M.B."/>
            <person name="Coutinho L.L."/>
            <person name="Cursino-Santos J.R."/>
            <person name="El-Dorry H."/>
            <person name="Faria J.B."/>
            <person name="Ferreira A.J.S."/>
            <person name="Ferreira R.C.C."/>
            <person name="Ferro M.I.T."/>
            <person name="Formighieri E.F."/>
            <person name="Franco M.C."/>
            <person name="Greggio C.C."/>
            <person name="Gruber A."/>
            <person name="Katsuyama A.M."/>
            <person name="Kishi L.T."/>
            <person name="Leite R.P."/>
            <person name="Lemos E.G.M."/>
            <person name="Lemos M.V.F."/>
            <person name="Locali E.C."/>
            <person name="Machado M.A."/>
            <person name="Madeira A.M.B.N."/>
            <person name="Martinez-Rossi N.M."/>
            <person name="Martins E.C."/>
            <person name="Meidanis J."/>
            <person name="Menck C.F.M."/>
            <person name="Miyaki C.Y."/>
            <person name="Moon D.H."/>
            <person name="Moreira L.M."/>
            <person name="Novo M.T.M."/>
            <person name="Okura V.K."/>
            <person name="Oliveira M.C."/>
            <person name="Oliveira V.R."/>
            <person name="Pereira H.A."/>
            <person name="Rossi A."/>
            <person name="Sena J.A.D."/>
            <person name="Silva C."/>
            <person name="de Souza R.F."/>
            <person name="Spinola L.A.F."/>
            <person name="Takita M.A."/>
            <person name="Tamura R.E."/>
            <person name="Teixeira E.C."/>
            <person name="Tezza R.I.D."/>
            <person name="Trindade dos Santos M."/>
            <person name="Truffi D."/>
            <person name="Tsai S.M."/>
            <person name="White F.F."/>
            <person name="Setubal J.C."/>
            <person name="Kitajima J.P."/>
        </authorList>
    </citation>
    <scope>NUCLEOTIDE SEQUENCE [LARGE SCALE GENOMIC DNA]</scope>
    <source>
        <strain>ATCC 33913 / DSM 3586 / NCPPB 528 / LMG 568 / P 25</strain>
    </source>
</reference>
<organism>
    <name type="scientific">Xanthomonas campestris pv. campestris (strain ATCC 33913 / DSM 3586 / NCPPB 528 / LMG 568 / P 25)</name>
    <dbReference type="NCBI Taxonomy" id="190485"/>
    <lineage>
        <taxon>Bacteria</taxon>
        <taxon>Pseudomonadati</taxon>
        <taxon>Pseudomonadota</taxon>
        <taxon>Gammaproteobacteria</taxon>
        <taxon>Lysobacterales</taxon>
        <taxon>Lysobacteraceae</taxon>
        <taxon>Xanthomonas</taxon>
    </lineage>
</organism>
<evidence type="ECO:0000250" key="1"/>
<evidence type="ECO:0000255" key="2">
    <source>
        <dbReference type="PROSITE-ProRule" id="PRU01135"/>
    </source>
</evidence>
<evidence type="ECO:0000256" key="3">
    <source>
        <dbReference type="SAM" id="MobiDB-lite"/>
    </source>
</evidence>
<evidence type="ECO:0000269" key="4">
    <source>
    </source>
</evidence>
<evidence type="ECO:0000305" key="5"/>
<evidence type="ECO:0007829" key="6">
    <source>
        <dbReference type="PDB" id="4TUF"/>
    </source>
</evidence>
<sequence length="484" mass="52242">MSIFRTASTLALATALALAAGPAFSYSINNSRQIVDDSGKVVQLKGVNVFGFETGNHVMHGLWARNWKDMIVQMQGLGFNAVRLPFCPATLRSDTMPASIDYSRNADLQGLTSLQILDKVIAEFNARGMYVLLDHHTPDCAGISELWYTGSYTEAQWLADLRFVANRYKNVPYVLGLDLKNEPHGAATWGTGNAATDWNKAAERGSAAVLAVAPKWLIAVEGITDNPVCSTNGGIFWGGNLQPLACTPLNIPANRLLLAPHVYGPDVFVQSYFNDSNFPNNMPAIWERHFGQFAGTHALLLGEFGGKYGEGDARDKTWQDALVKYLRSKGINQGFYWSWNPNSGDTGGILRDDWTSVRQDKMTLLRTLWGTAGNTTPTPTPTPTPTPTPTPTPTPTPTPGTSTFSTKVIVDNSWNGGYCNRVQVTNTGTASGTWSIAVPVTGTVNNAWNATWSQSGSTLRASGVDFNRTLAAGATAEFGFCAAS</sequence>